<gene>
    <name evidence="1" type="primary">glyQ</name>
    <name type="ordered locus">VSAL_I2964</name>
</gene>
<proteinExistence type="inferred from homology"/>
<protein>
    <recommendedName>
        <fullName evidence="1">Glycine--tRNA ligase alpha subunit</fullName>
        <ecNumber evidence="1">6.1.1.14</ecNumber>
    </recommendedName>
    <alternativeName>
        <fullName evidence="1">Glycyl-tRNA synthetase alpha subunit</fullName>
        <shortName evidence="1">GlyRS</shortName>
    </alternativeName>
</protein>
<sequence length="310" mass="35478">MQKYDIKTFQGMILALQDYWAQQGCTIVQPLDMEVGAGTSHPMTCLRALGPEPMATAYVQPSRRPTDGRYGENPNRLQHYYQFQVALKPSPDNIQELYLGSLEVLGIDPLVHDIRFVEDNWENPTLGAWGLGWEIWLNGMEVTQFTYFQQVGGLECKPVTGEITYGIERLAMYIQEVGSVYDLVWNYGPQGVVTYGDIFHQNEVEQSTYNFEHADVDFLFGFFDQCEKECKELLELEKPLPLPAYERILKAGHAFNLLDARKAISVTERQRYILRIRNLTKSVAEAYYASREALGFPMCRSTKPTATEEK</sequence>
<feature type="chain" id="PRO_1000101173" description="Glycine--tRNA ligase alpha subunit">
    <location>
        <begin position="1"/>
        <end position="310"/>
    </location>
</feature>
<organism>
    <name type="scientific">Aliivibrio salmonicida (strain LFI1238)</name>
    <name type="common">Vibrio salmonicida (strain LFI1238)</name>
    <dbReference type="NCBI Taxonomy" id="316275"/>
    <lineage>
        <taxon>Bacteria</taxon>
        <taxon>Pseudomonadati</taxon>
        <taxon>Pseudomonadota</taxon>
        <taxon>Gammaproteobacteria</taxon>
        <taxon>Vibrionales</taxon>
        <taxon>Vibrionaceae</taxon>
        <taxon>Aliivibrio</taxon>
    </lineage>
</organism>
<dbReference type="EC" id="6.1.1.14" evidence="1"/>
<dbReference type="EMBL" id="FM178379">
    <property type="protein sequence ID" value="CAQ80648.1"/>
    <property type="molecule type" value="Genomic_DNA"/>
</dbReference>
<dbReference type="RefSeq" id="WP_012551366.1">
    <property type="nucleotide sequence ID" value="NC_011312.1"/>
</dbReference>
<dbReference type="SMR" id="B6EGT2"/>
<dbReference type="KEGG" id="vsa:VSAL_I2964"/>
<dbReference type="eggNOG" id="COG0752">
    <property type="taxonomic scope" value="Bacteria"/>
</dbReference>
<dbReference type="HOGENOM" id="CLU_057066_1_0_6"/>
<dbReference type="Proteomes" id="UP000001730">
    <property type="component" value="Chromosome 1"/>
</dbReference>
<dbReference type="GO" id="GO:0005829">
    <property type="term" value="C:cytosol"/>
    <property type="evidence" value="ECO:0007669"/>
    <property type="project" value="TreeGrafter"/>
</dbReference>
<dbReference type="GO" id="GO:0005524">
    <property type="term" value="F:ATP binding"/>
    <property type="evidence" value="ECO:0007669"/>
    <property type="project" value="UniProtKB-UniRule"/>
</dbReference>
<dbReference type="GO" id="GO:0004820">
    <property type="term" value="F:glycine-tRNA ligase activity"/>
    <property type="evidence" value="ECO:0007669"/>
    <property type="project" value="UniProtKB-UniRule"/>
</dbReference>
<dbReference type="GO" id="GO:0006426">
    <property type="term" value="P:glycyl-tRNA aminoacylation"/>
    <property type="evidence" value="ECO:0007669"/>
    <property type="project" value="UniProtKB-UniRule"/>
</dbReference>
<dbReference type="CDD" id="cd00733">
    <property type="entry name" value="GlyRS_alpha_core"/>
    <property type="match status" value="1"/>
</dbReference>
<dbReference type="FunFam" id="3.30.930.10:FF:000006">
    <property type="entry name" value="Glycine--tRNA ligase alpha subunit"/>
    <property type="match status" value="1"/>
</dbReference>
<dbReference type="Gene3D" id="3.30.930.10">
    <property type="entry name" value="Bira Bifunctional Protein, Domain 2"/>
    <property type="match status" value="1"/>
</dbReference>
<dbReference type="Gene3D" id="1.20.58.180">
    <property type="entry name" value="Class II aaRS and biotin synthetases, domain 2"/>
    <property type="match status" value="1"/>
</dbReference>
<dbReference type="HAMAP" id="MF_00254">
    <property type="entry name" value="Gly_tRNA_synth_alpha"/>
    <property type="match status" value="1"/>
</dbReference>
<dbReference type="InterPro" id="IPR045864">
    <property type="entry name" value="aa-tRNA-synth_II/BPL/LPL"/>
</dbReference>
<dbReference type="InterPro" id="IPR006194">
    <property type="entry name" value="Gly-tRNA-synth_heterodimer"/>
</dbReference>
<dbReference type="InterPro" id="IPR002310">
    <property type="entry name" value="Gly-tRNA_ligase_asu"/>
</dbReference>
<dbReference type="NCBIfam" id="TIGR00388">
    <property type="entry name" value="glyQ"/>
    <property type="match status" value="1"/>
</dbReference>
<dbReference type="NCBIfam" id="NF006827">
    <property type="entry name" value="PRK09348.1"/>
    <property type="match status" value="1"/>
</dbReference>
<dbReference type="PANTHER" id="PTHR30075:SF2">
    <property type="entry name" value="GLYCINE--TRNA LIGASE, CHLOROPLASTIC_MITOCHONDRIAL 2"/>
    <property type="match status" value="1"/>
</dbReference>
<dbReference type="PANTHER" id="PTHR30075">
    <property type="entry name" value="GLYCYL-TRNA SYNTHETASE"/>
    <property type="match status" value="1"/>
</dbReference>
<dbReference type="Pfam" id="PF02091">
    <property type="entry name" value="tRNA-synt_2e"/>
    <property type="match status" value="1"/>
</dbReference>
<dbReference type="PRINTS" id="PR01044">
    <property type="entry name" value="TRNASYNTHGA"/>
</dbReference>
<dbReference type="SUPFAM" id="SSF55681">
    <property type="entry name" value="Class II aaRS and biotin synthetases"/>
    <property type="match status" value="1"/>
</dbReference>
<dbReference type="PROSITE" id="PS50861">
    <property type="entry name" value="AA_TRNA_LIGASE_II_GLYAB"/>
    <property type="match status" value="1"/>
</dbReference>
<keyword id="KW-0030">Aminoacyl-tRNA synthetase</keyword>
<keyword id="KW-0067">ATP-binding</keyword>
<keyword id="KW-0963">Cytoplasm</keyword>
<keyword id="KW-0436">Ligase</keyword>
<keyword id="KW-0547">Nucleotide-binding</keyword>
<keyword id="KW-0648">Protein biosynthesis</keyword>
<evidence type="ECO:0000255" key="1">
    <source>
        <dbReference type="HAMAP-Rule" id="MF_00254"/>
    </source>
</evidence>
<comment type="catalytic activity">
    <reaction evidence="1">
        <text>tRNA(Gly) + glycine + ATP = glycyl-tRNA(Gly) + AMP + diphosphate</text>
        <dbReference type="Rhea" id="RHEA:16013"/>
        <dbReference type="Rhea" id="RHEA-COMP:9664"/>
        <dbReference type="Rhea" id="RHEA-COMP:9683"/>
        <dbReference type="ChEBI" id="CHEBI:30616"/>
        <dbReference type="ChEBI" id="CHEBI:33019"/>
        <dbReference type="ChEBI" id="CHEBI:57305"/>
        <dbReference type="ChEBI" id="CHEBI:78442"/>
        <dbReference type="ChEBI" id="CHEBI:78522"/>
        <dbReference type="ChEBI" id="CHEBI:456215"/>
        <dbReference type="EC" id="6.1.1.14"/>
    </reaction>
</comment>
<comment type="subunit">
    <text evidence="1">Tetramer of two alpha and two beta subunits.</text>
</comment>
<comment type="subcellular location">
    <subcellularLocation>
        <location evidence="1">Cytoplasm</location>
    </subcellularLocation>
</comment>
<comment type="similarity">
    <text evidence="1">Belongs to the class-II aminoacyl-tRNA synthetase family.</text>
</comment>
<accession>B6EGT2</accession>
<reference key="1">
    <citation type="journal article" date="2008" name="BMC Genomics">
        <title>The genome sequence of the fish pathogen Aliivibrio salmonicida strain LFI1238 shows extensive evidence of gene decay.</title>
        <authorList>
            <person name="Hjerde E."/>
            <person name="Lorentzen M.S."/>
            <person name="Holden M.T."/>
            <person name="Seeger K."/>
            <person name="Paulsen S."/>
            <person name="Bason N."/>
            <person name="Churcher C."/>
            <person name="Harris D."/>
            <person name="Norbertczak H."/>
            <person name="Quail M.A."/>
            <person name="Sanders S."/>
            <person name="Thurston S."/>
            <person name="Parkhill J."/>
            <person name="Willassen N.P."/>
            <person name="Thomson N.R."/>
        </authorList>
    </citation>
    <scope>NUCLEOTIDE SEQUENCE [LARGE SCALE GENOMIC DNA]</scope>
    <source>
        <strain>LFI1238</strain>
    </source>
</reference>
<name>SYGA_ALISL</name>